<reference key="1">
    <citation type="journal article" date="2005" name="Proc. Natl. Acad. Sci. U.S.A.">
        <title>Whole genome sequence of Staphylococcus saprophyticus reveals the pathogenesis of uncomplicated urinary tract infection.</title>
        <authorList>
            <person name="Kuroda M."/>
            <person name="Yamashita A."/>
            <person name="Hirakawa H."/>
            <person name="Kumano M."/>
            <person name="Morikawa K."/>
            <person name="Higashide M."/>
            <person name="Maruyama A."/>
            <person name="Inose Y."/>
            <person name="Matoba K."/>
            <person name="Toh H."/>
            <person name="Kuhara S."/>
            <person name="Hattori M."/>
            <person name="Ohta T."/>
        </authorList>
    </citation>
    <scope>NUCLEOTIDE SEQUENCE [LARGE SCALE GENOMIC DNA]</scope>
    <source>
        <strain>ATCC 15305 / DSM 20229 / NCIMB 8711 / NCTC 7292 / S-41</strain>
    </source>
</reference>
<gene>
    <name evidence="1" type="primary">hisH</name>
    <name type="ordered locus">SSP0426</name>
</gene>
<feature type="chain" id="PRO_0000231762" description="Imidazole glycerol phosphate synthase subunit HisH">
    <location>
        <begin position="1"/>
        <end position="198"/>
    </location>
</feature>
<feature type="domain" description="Glutamine amidotransferase type-1" evidence="1">
    <location>
        <begin position="1"/>
        <end position="194"/>
    </location>
</feature>
<feature type="active site" description="Nucleophile" evidence="1">
    <location>
        <position position="77"/>
    </location>
</feature>
<feature type="active site" evidence="1">
    <location>
        <position position="169"/>
    </location>
</feature>
<feature type="active site" evidence="1">
    <location>
        <position position="171"/>
    </location>
</feature>
<organism>
    <name type="scientific">Staphylococcus saprophyticus subsp. saprophyticus (strain ATCC 15305 / DSM 20229 / NCIMB 8711 / NCTC 7292 / S-41)</name>
    <dbReference type="NCBI Taxonomy" id="342451"/>
    <lineage>
        <taxon>Bacteria</taxon>
        <taxon>Bacillati</taxon>
        <taxon>Bacillota</taxon>
        <taxon>Bacilli</taxon>
        <taxon>Bacillales</taxon>
        <taxon>Staphylococcaceae</taxon>
        <taxon>Staphylococcus</taxon>
    </lineage>
</organism>
<name>HIS5_STAS1</name>
<evidence type="ECO:0000255" key="1">
    <source>
        <dbReference type="HAMAP-Rule" id="MF_00278"/>
    </source>
</evidence>
<sequence length="198" mass="21918">MIAIIDYGLGNVKNVQRAVQYLGYDAILTDKYNEIANADVVILPGVGHFKDAMQAINERGLANIITSITDKPVIGICLGMQLFYRWSAEGDVEGLNIFPGNIIPIQSPYPVPHLGWNNLISKHPLLLHDVYFVHAYQAEMSQHVVAYTEYGTKIPAIVQYQNYIGIQFHPEKSGDDGLAILNQALKGGFQDDQTMASN</sequence>
<accession>Q4A047</accession>
<protein>
    <recommendedName>
        <fullName evidence="1">Imidazole glycerol phosphate synthase subunit HisH</fullName>
        <ecNumber evidence="1">4.3.2.10</ecNumber>
    </recommendedName>
    <alternativeName>
        <fullName evidence="1">IGP synthase glutaminase subunit</fullName>
        <ecNumber evidence="1">3.5.1.2</ecNumber>
    </alternativeName>
    <alternativeName>
        <fullName evidence="1">IGP synthase subunit HisH</fullName>
    </alternativeName>
    <alternativeName>
        <fullName evidence="1">ImGP synthase subunit HisH</fullName>
        <shortName evidence="1">IGPS subunit HisH</shortName>
    </alternativeName>
</protein>
<dbReference type="EC" id="4.3.2.10" evidence="1"/>
<dbReference type="EC" id="3.5.1.2" evidence="1"/>
<dbReference type="EMBL" id="AP008934">
    <property type="protein sequence ID" value="BAE17571.1"/>
    <property type="molecule type" value="Genomic_DNA"/>
</dbReference>
<dbReference type="RefSeq" id="WP_011302394.1">
    <property type="nucleotide sequence ID" value="NZ_MTGA01000036.1"/>
</dbReference>
<dbReference type="SMR" id="Q4A047"/>
<dbReference type="GeneID" id="3616174"/>
<dbReference type="KEGG" id="ssp:SSP0426"/>
<dbReference type="PATRIC" id="fig|342451.11.peg.431"/>
<dbReference type="eggNOG" id="COG0118">
    <property type="taxonomic scope" value="Bacteria"/>
</dbReference>
<dbReference type="HOGENOM" id="CLU_071837_2_2_9"/>
<dbReference type="OrthoDB" id="9807137at2"/>
<dbReference type="UniPathway" id="UPA00031">
    <property type="reaction ID" value="UER00010"/>
</dbReference>
<dbReference type="Proteomes" id="UP000006371">
    <property type="component" value="Chromosome"/>
</dbReference>
<dbReference type="GO" id="GO:0005737">
    <property type="term" value="C:cytoplasm"/>
    <property type="evidence" value="ECO:0007669"/>
    <property type="project" value="UniProtKB-SubCell"/>
</dbReference>
<dbReference type="GO" id="GO:0004359">
    <property type="term" value="F:glutaminase activity"/>
    <property type="evidence" value="ECO:0007669"/>
    <property type="project" value="UniProtKB-EC"/>
</dbReference>
<dbReference type="GO" id="GO:0000107">
    <property type="term" value="F:imidazoleglycerol-phosphate synthase activity"/>
    <property type="evidence" value="ECO:0007669"/>
    <property type="project" value="UniProtKB-UniRule"/>
</dbReference>
<dbReference type="GO" id="GO:0016829">
    <property type="term" value="F:lyase activity"/>
    <property type="evidence" value="ECO:0007669"/>
    <property type="project" value="UniProtKB-KW"/>
</dbReference>
<dbReference type="GO" id="GO:0000105">
    <property type="term" value="P:L-histidine biosynthetic process"/>
    <property type="evidence" value="ECO:0007669"/>
    <property type="project" value="UniProtKB-UniRule"/>
</dbReference>
<dbReference type="CDD" id="cd01748">
    <property type="entry name" value="GATase1_IGP_Synthase"/>
    <property type="match status" value="1"/>
</dbReference>
<dbReference type="Gene3D" id="3.40.50.880">
    <property type="match status" value="1"/>
</dbReference>
<dbReference type="HAMAP" id="MF_00278">
    <property type="entry name" value="HisH"/>
    <property type="match status" value="1"/>
</dbReference>
<dbReference type="InterPro" id="IPR029062">
    <property type="entry name" value="Class_I_gatase-like"/>
</dbReference>
<dbReference type="InterPro" id="IPR017926">
    <property type="entry name" value="GATASE"/>
</dbReference>
<dbReference type="InterPro" id="IPR010139">
    <property type="entry name" value="Imidazole-glycPsynth_HisH"/>
</dbReference>
<dbReference type="NCBIfam" id="TIGR01855">
    <property type="entry name" value="IMP_synth_hisH"/>
    <property type="match status" value="1"/>
</dbReference>
<dbReference type="PANTHER" id="PTHR42701">
    <property type="entry name" value="IMIDAZOLE GLYCEROL PHOSPHATE SYNTHASE SUBUNIT HISH"/>
    <property type="match status" value="1"/>
</dbReference>
<dbReference type="PANTHER" id="PTHR42701:SF1">
    <property type="entry name" value="IMIDAZOLE GLYCEROL PHOSPHATE SYNTHASE SUBUNIT HISH"/>
    <property type="match status" value="1"/>
</dbReference>
<dbReference type="Pfam" id="PF00117">
    <property type="entry name" value="GATase"/>
    <property type="match status" value="1"/>
</dbReference>
<dbReference type="PIRSF" id="PIRSF000495">
    <property type="entry name" value="Amidotransf_hisH"/>
    <property type="match status" value="1"/>
</dbReference>
<dbReference type="SUPFAM" id="SSF52317">
    <property type="entry name" value="Class I glutamine amidotransferase-like"/>
    <property type="match status" value="1"/>
</dbReference>
<dbReference type="PROSITE" id="PS51273">
    <property type="entry name" value="GATASE_TYPE_1"/>
    <property type="match status" value="1"/>
</dbReference>
<keyword id="KW-0028">Amino-acid biosynthesis</keyword>
<keyword id="KW-0963">Cytoplasm</keyword>
<keyword id="KW-0315">Glutamine amidotransferase</keyword>
<keyword id="KW-0368">Histidine biosynthesis</keyword>
<keyword id="KW-0378">Hydrolase</keyword>
<keyword id="KW-0456">Lyase</keyword>
<keyword id="KW-1185">Reference proteome</keyword>
<comment type="function">
    <text evidence="1">IGPS catalyzes the conversion of PRFAR and glutamine to IGP, AICAR and glutamate. The HisH subunit catalyzes the hydrolysis of glutamine to glutamate and ammonia as part of the synthesis of IGP and AICAR. The resulting ammonia molecule is channeled to the active site of HisF.</text>
</comment>
<comment type="catalytic activity">
    <reaction evidence="1">
        <text>5-[(5-phospho-1-deoxy-D-ribulos-1-ylimino)methylamino]-1-(5-phospho-beta-D-ribosyl)imidazole-4-carboxamide + L-glutamine = D-erythro-1-(imidazol-4-yl)glycerol 3-phosphate + 5-amino-1-(5-phospho-beta-D-ribosyl)imidazole-4-carboxamide + L-glutamate + H(+)</text>
        <dbReference type="Rhea" id="RHEA:24793"/>
        <dbReference type="ChEBI" id="CHEBI:15378"/>
        <dbReference type="ChEBI" id="CHEBI:29985"/>
        <dbReference type="ChEBI" id="CHEBI:58278"/>
        <dbReference type="ChEBI" id="CHEBI:58359"/>
        <dbReference type="ChEBI" id="CHEBI:58475"/>
        <dbReference type="ChEBI" id="CHEBI:58525"/>
        <dbReference type="EC" id="4.3.2.10"/>
    </reaction>
</comment>
<comment type="catalytic activity">
    <reaction evidence="1">
        <text>L-glutamine + H2O = L-glutamate + NH4(+)</text>
        <dbReference type="Rhea" id="RHEA:15889"/>
        <dbReference type="ChEBI" id="CHEBI:15377"/>
        <dbReference type="ChEBI" id="CHEBI:28938"/>
        <dbReference type="ChEBI" id="CHEBI:29985"/>
        <dbReference type="ChEBI" id="CHEBI:58359"/>
        <dbReference type="EC" id="3.5.1.2"/>
    </reaction>
</comment>
<comment type="pathway">
    <text evidence="1">Amino-acid biosynthesis; L-histidine biosynthesis; L-histidine from 5-phospho-alpha-D-ribose 1-diphosphate: step 5/9.</text>
</comment>
<comment type="subunit">
    <text evidence="1">Heterodimer of HisH and HisF.</text>
</comment>
<comment type="subcellular location">
    <subcellularLocation>
        <location evidence="1">Cytoplasm</location>
    </subcellularLocation>
</comment>
<proteinExistence type="inferred from homology"/>